<gene>
    <name evidence="1" type="primary">murI</name>
    <name type="ordered locus">GbCGDNIH1_0872</name>
</gene>
<evidence type="ECO:0000255" key="1">
    <source>
        <dbReference type="HAMAP-Rule" id="MF_00258"/>
    </source>
</evidence>
<keyword id="KW-0133">Cell shape</keyword>
<keyword id="KW-0961">Cell wall biogenesis/degradation</keyword>
<keyword id="KW-0413">Isomerase</keyword>
<keyword id="KW-0573">Peptidoglycan synthesis</keyword>
<keyword id="KW-1185">Reference proteome</keyword>
<comment type="function">
    <text evidence="1">Provides the (R)-glutamate required for cell wall biosynthesis.</text>
</comment>
<comment type="catalytic activity">
    <reaction evidence="1">
        <text>L-glutamate = D-glutamate</text>
        <dbReference type="Rhea" id="RHEA:12813"/>
        <dbReference type="ChEBI" id="CHEBI:29985"/>
        <dbReference type="ChEBI" id="CHEBI:29986"/>
        <dbReference type="EC" id="5.1.1.3"/>
    </reaction>
</comment>
<comment type="pathway">
    <text evidence="1">Cell wall biogenesis; peptidoglycan biosynthesis.</text>
</comment>
<comment type="similarity">
    <text evidence="1">Belongs to the aspartate/glutamate racemases family.</text>
</comment>
<reference key="1">
    <citation type="journal article" date="2007" name="J. Bacteriol.">
        <title>Genome sequence analysis of the emerging human pathogenic acetic acid bacterium Granulibacter bethesdensis.</title>
        <authorList>
            <person name="Greenberg D.E."/>
            <person name="Porcella S.F."/>
            <person name="Zelazny A.M."/>
            <person name="Virtaneva K."/>
            <person name="Sturdevant D.E."/>
            <person name="Kupko J.J. III"/>
            <person name="Barbian K.D."/>
            <person name="Babar A."/>
            <person name="Dorward D.W."/>
            <person name="Holland S.M."/>
        </authorList>
    </citation>
    <scope>NUCLEOTIDE SEQUENCE [LARGE SCALE GENOMIC DNA]</scope>
    <source>
        <strain>ATCC BAA-1260 / CGDNIH1</strain>
    </source>
</reference>
<sequence length="276" mass="29248">MRKTDAHILVFDSGIGGLGVADCIRRMLPAATLGYVADTAGFPYGAMSDEALVTRVLTVLEQAIARLRPDMVVIACNTASTLALSALRSRHDLPFIGCVPPLKWAASVSATRQIGLLATPATVDRPYLTALMQEHGQGCTLHAHGARHLAGYAEAVFRGETVLVEAVRAELGILGMIPDIDAVALGCTHYGRLLPWLRQAMPRPVAWLDPAEAVARQAARIAITAAATAAPDSLPRAAPCWAQTVFTTGAVPDEATRQAWAAEGFPEWQPLEIASA</sequence>
<proteinExistence type="inferred from homology"/>
<protein>
    <recommendedName>
        <fullName evidence="1">Glutamate racemase</fullName>
        <ecNumber evidence="1">5.1.1.3</ecNumber>
    </recommendedName>
</protein>
<dbReference type="EC" id="5.1.1.3" evidence="1"/>
<dbReference type="EMBL" id="CP000394">
    <property type="protein sequence ID" value="ABI61770.1"/>
    <property type="molecule type" value="Genomic_DNA"/>
</dbReference>
<dbReference type="RefSeq" id="WP_011631579.1">
    <property type="nucleotide sequence ID" value="NC_008343.2"/>
</dbReference>
<dbReference type="SMR" id="Q0BTT2"/>
<dbReference type="STRING" id="391165.GbCGDNIH1_0872"/>
<dbReference type="KEGG" id="gbe:GbCGDNIH1_0872"/>
<dbReference type="eggNOG" id="COG0796">
    <property type="taxonomic scope" value="Bacteria"/>
</dbReference>
<dbReference type="HOGENOM" id="CLU_052344_2_0_5"/>
<dbReference type="OrthoDB" id="9801055at2"/>
<dbReference type="UniPathway" id="UPA00219"/>
<dbReference type="Proteomes" id="UP000001963">
    <property type="component" value="Chromosome"/>
</dbReference>
<dbReference type="GO" id="GO:0008881">
    <property type="term" value="F:glutamate racemase activity"/>
    <property type="evidence" value="ECO:0007669"/>
    <property type="project" value="UniProtKB-UniRule"/>
</dbReference>
<dbReference type="GO" id="GO:0071555">
    <property type="term" value="P:cell wall organization"/>
    <property type="evidence" value="ECO:0007669"/>
    <property type="project" value="UniProtKB-KW"/>
</dbReference>
<dbReference type="GO" id="GO:0009252">
    <property type="term" value="P:peptidoglycan biosynthetic process"/>
    <property type="evidence" value="ECO:0007669"/>
    <property type="project" value="UniProtKB-UniRule"/>
</dbReference>
<dbReference type="GO" id="GO:0008360">
    <property type="term" value="P:regulation of cell shape"/>
    <property type="evidence" value="ECO:0007669"/>
    <property type="project" value="UniProtKB-KW"/>
</dbReference>
<dbReference type="Gene3D" id="3.40.50.1860">
    <property type="match status" value="2"/>
</dbReference>
<dbReference type="HAMAP" id="MF_00258">
    <property type="entry name" value="Glu_racemase"/>
    <property type="match status" value="1"/>
</dbReference>
<dbReference type="InterPro" id="IPR015942">
    <property type="entry name" value="Asp/Glu/hydantoin_racemase"/>
</dbReference>
<dbReference type="InterPro" id="IPR001920">
    <property type="entry name" value="Asp/Glu_race"/>
</dbReference>
<dbReference type="InterPro" id="IPR018187">
    <property type="entry name" value="Asp/Glu_racemase_AS_1"/>
</dbReference>
<dbReference type="InterPro" id="IPR004391">
    <property type="entry name" value="Glu_race"/>
</dbReference>
<dbReference type="NCBIfam" id="TIGR00067">
    <property type="entry name" value="glut_race"/>
    <property type="match status" value="1"/>
</dbReference>
<dbReference type="PANTHER" id="PTHR21198">
    <property type="entry name" value="GLUTAMATE RACEMASE"/>
    <property type="match status" value="1"/>
</dbReference>
<dbReference type="PANTHER" id="PTHR21198:SF2">
    <property type="entry name" value="GLUTAMATE RACEMASE"/>
    <property type="match status" value="1"/>
</dbReference>
<dbReference type="Pfam" id="PF01177">
    <property type="entry name" value="Asp_Glu_race"/>
    <property type="match status" value="1"/>
</dbReference>
<dbReference type="SUPFAM" id="SSF53681">
    <property type="entry name" value="Aspartate/glutamate racemase"/>
    <property type="match status" value="2"/>
</dbReference>
<dbReference type="PROSITE" id="PS00923">
    <property type="entry name" value="ASP_GLU_RACEMASE_1"/>
    <property type="match status" value="1"/>
</dbReference>
<name>MURI_GRABC</name>
<organism>
    <name type="scientific">Granulibacter bethesdensis (strain ATCC BAA-1260 / CGDNIH1)</name>
    <dbReference type="NCBI Taxonomy" id="391165"/>
    <lineage>
        <taxon>Bacteria</taxon>
        <taxon>Pseudomonadati</taxon>
        <taxon>Pseudomonadota</taxon>
        <taxon>Alphaproteobacteria</taxon>
        <taxon>Acetobacterales</taxon>
        <taxon>Acetobacteraceae</taxon>
        <taxon>Granulibacter</taxon>
    </lineage>
</organism>
<accession>Q0BTT2</accession>
<feature type="chain" id="PRO_1000078559" description="Glutamate racemase">
    <location>
        <begin position="1"/>
        <end position="276"/>
    </location>
</feature>
<feature type="active site" description="Proton donor/acceptor" evidence="1">
    <location>
        <position position="76"/>
    </location>
</feature>
<feature type="active site" description="Proton donor/acceptor" evidence="1">
    <location>
        <position position="187"/>
    </location>
</feature>
<feature type="binding site" evidence="1">
    <location>
        <begin position="12"/>
        <end position="13"/>
    </location>
    <ligand>
        <name>substrate</name>
    </ligand>
</feature>
<feature type="binding site" evidence="1">
    <location>
        <begin position="44"/>
        <end position="45"/>
    </location>
    <ligand>
        <name>substrate</name>
    </ligand>
</feature>
<feature type="binding site" evidence="1">
    <location>
        <begin position="77"/>
        <end position="78"/>
    </location>
    <ligand>
        <name>substrate</name>
    </ligand>
</feature>
<feature type="binding site" evidence="1">
    <location>
        <begin position="188"/>
        <end position="189"/>
    </location>
    <ligand>
        <name>substrate</name>
    </ligand>
</feature>